<dbReference type="EMBL" id="CP000046">
    <property type="protein sequence ID" value="AAW38074.1"/>
    <property type="molecule type" value="Genomic_DNA"/>
</dbReference>
<dbReference type="SMR" id="Q5HGK7"/>
<dbReference type="KEGG" id="sac:SACOL1240"/>
<dbReference type="HOGENOM" id="CLU_017496_1_0_9"/>
<dbReference type="Proteomes" id="UP000000530">
    <property type="component" value="Chromosome"/>
</dbReference>
<dbReference type="GO" id="GO:0004371">
    <property type="term" value="F:glycerone kinase activity"/>
    <property type="evidence" value="ECO:0007669"/>
    <property type="project" value="InterPro"/>
</dbReference>
<dbReference type="GO" id="GO:0006071">
    <property type="term" value="P:glycerol metabolic process"/>
    <property type="evidence" value="ECO:0007669"/>
    <property type="project" value="InterPro"/>
</dbReference>
<dbReference type="Gene3D" id="1.25.40.340">
    <property type="match status" value="1"/>
</dbReference>
<dbReference type="InterPro" id="IPR050270">
    <property type="entry name" value="DegV_domain_contain"/>
</dbReference>
<dbReference type="InterPro" id="IPR004007">
    <property type="entry name" value="DhaL_dom"/>
</dbReference>
<dbReference type="InterPro" id="IPR036117">
    <property type="entry name" value="DhaL_dom_sf"/>
</dbReference>
<dbReference type="InterPro" id="IPR033470">
    <property type="entry name" value="FakA-like_C"/>
</dbReference>
<dbReference type="InterPro" id="IPR048394">
    <property type="entry name" value="FakA-like_M"/>
</dbReference>
<dbReference type="InterPro" id="IPR019986">
    <property type="entry name" value="YloV-like"/>
</dbReference>
<dbReference type="NCBIfam" id="NF038248">
    <property type="entry name" value="FakA_VfrB"/>
    <property type="match status" value="1"/>
</dbReference>
<dbReference type="NCBIfam" id="TIGR03599">
    <property type="entry name" value="YloV"/>
    <property type="match status" value="1"/>
</dbReference>
<dbReference type="PANTHER" id="PTHR33434">
    <property type="entry name" value="DEGV DOMAIN-CONTAINING PROTEIN DR_1986-RELATED"/>
    <property type="match status" value="1"/>
</dbReference>
<dbReference type="PANTHER" id="PTHR33434:SF4">
    <property type="entry name" value="PHOSPHATASE PROTEIN"/>
    <property type="match status" value="1"/>
</dbReference>
<dbReference type="Pfam" id="PF02734">
    <property type="entry name" value="Dak2"/>
    <property type="match status" value="1"/>
</dbReference>
<dbReference type="Pfam" id="PF13684">
    <property type="entry name" value="FakA-like_C"/>
    <property type="match status" value="1"/>
</dbReference>
<dbReference type="Pfam" id="PF21645">
    <property type="entry name" value="FakA-like_M"/>
    <property type="match status" value="1"/>
</dbReference>
<dbReference type="SMART" id="SM01121">
    <property type="entry name" value="Dak1_2"/>
    <property type="match status" value="1"/>
</dbReference>
<dbReference type="SMART" id="SM01120">
    <property type="entry name" value="Dak2"/>
    <property type="match status" value="1"/>
</dbReference>
<dbReference type="SUPFAM" id="SSF101473">
    <property type="entry name" value="DhaL-like"/>
    <property type="match status" value="1"/>
</dbReference>
<dbReference type="PROSITE" id="PS51480">
    <property type="entry name" value="DHAL"/>
    <property type="match status" value="1"/>
</dbReference>
<name>Y1240_STAAC</name>
<sequence>MISKINGKLFADMIIQGAQNLSNNADLVDSLNVYPVPDGDTGTNMNLTMTSGREEVENNLSKNIGELGKTFSKGLLMGARGNSGVILSQLFRGFCKNIESESEINSKLLAESFQAGVETAYKAVMKPVEGTILTVAKDAAQAAIEKANNTEDCIELMEYIIVKANESLENTPNLLAVLKEVGVVDSGGKGLLCVYEGFLKALKGEKVEAKVAKIDKDEFVHDEHDFHGVINTEDIIYGYCTEMMVRFGKNKKAFDEQEFRQDMSQFGDSLLVINDEEIVKVHVHTEYPGKVFNYGQQYGELIKLKVENMREQHREVIRKEQHTAKPKMETVETAIITISMGEGISEIFKSMGATHIISGGQTMNPSTEDIVKVIEQSKCKRAIILPNNKNILMASEQAASIVDAEAVVIPTKSIPQGISALFQYDVDATLEENKAQMADSVNNVKSGSLTYAVRDTKIDGVEIKKDAFMGLIEDKIVSSQSDQLTTVTELLNEMLAEDSEILTVIIGQDAEQAVTDNMINWIEEQYPDVEVEVHEGGQPIYQYFFSVE</sequence>
<organism>
    <name type="scientific">Staphylococcus aureus (strain COL)</name>
    <dbReference type="NCBI Taxonomy" id="93062"/>
    <lineage>
        <taxon>Bacteria</taxon>
        <taxon>Bacillati</taxon>
        <taxon>Bacillota</taxon>
        <taxon>Bacilli</taxon>
        <taxon>Bacillales</taxon>
        <taxon>Staphylococcaceae</taxon>
        <taxon>Staphylococcus</taxon>
    </lineage>
</organism>
<proteinExistence type="predicted"/>
<reference key="1">
    <citation type="journal article" date="2005" name="J. Bacteriol.">
        <title>Insights on evolution of virulence and resistance from the complete genome analysis of an early methicillin-resistant Staphylococcus aureus strain and a biofilm-producing methicillin-resistant Staphylococcus epidermidis strain.</title>
        <authorList>
            <person name="Gill S.R."/>
            <person name="Fouts D.E."/>
            <person name="Archer G.L."/>
            <person name="Mongodin E.F."/>
            <person name="DeBoy R.T."/>
            <person name="Ravel J."/>
            <person name="Paulsen I.T."/>
            <person name="Kolonay J.F."/>
            <person name="Brinkac L.M."/>
            <person name="Beanan M.J."/>
            <person name="Dodson R.J."/>
            <person name="Daugherty S.C."/>
            <person name="Madupu R."/>
            <person name="Angiuoli S.V."/>
            <person name="Durkin A.S."/>
            <person name="Haft D.H."/>
            <person name="Vamathevan J.J."/>
            <person name="Khouri H."/>
            <person name="Utterback T.R."/>
            <person name="Lee C."/>
            <person name="Dimitrov G."/>
            <person name="Jiang L."/>
            <person name="Qin H."/>
            <person name="Weidman J."/>
            <person name="Tran K."/>
            <person name="Kang K.H."/>
            <person name="Hance I.R."/>
            <person name="Nelson K.E."/>
            <person name="Fraser C.M."/>
        </authorList>
    </citation>
    <scope>NUCLEOTIDE SEQUENCE [LARGE SCALE GENOMIC DNA]</scope>
    <source>
        <strain>COL</strain>
    </source>
</reference>
<accession>Q5HGK7</accession>
<evidence type="ECO:0000255" key="1">
    <source>
        <dbReference type="PROSITE-ProRule" id="PRU00813"/>
    </source>
</evidence>
<gene>
    <name type="ordered locus">SACOL1240</name>
</gene>
<feature type="chain" id="PRO_0000304156" description="Uncharacterized protein SACOL1240">
    <location>
        <begin position="1"/>
        <end position="548"/>
    </location>
</feature>
<feature type="domain" description="DhaL" evidence="1">
    <location>
        <begin position="8"/>
        <end position="200"/>
    </location>
</feature>
<protein>
    <recommendedName>
        <fullName>Uncharacterized protein SACOL1240</fullName>
    </recommendedName>
</protein>